<feature type="chain" id="PRO_1000058093" description="Phosphoglycerate kinase">
    <location>
        <begin position="1"/>
        <end position="391"/>
    </location>
</feature>
<feature type="binding site" evidence="1">
    <location>
        <begin position="21"/>
        <end position="23"/>
    </location>
    <ligand>
        <name>substrate</name>
    </ligand>
</feature>
<feature type="binding site" evidence="1">
    <location>
        <position position="36"/>
    </location>
    <ligand>
        <name>substrate</name>
    </ligand>
</feature>
<feature type="binding site" evidence="1">
    <location>
        <begin position="59"/>
        <end position="62"/>
    </location>
    <ligand>
        <name>substrate</name>
    </ligand>
</feature>
<feature type="binding site" evidence="1">
    <location>
        <position position="113"/>
    </location>
    <ligand>
        <name>substrate</name>
    </ligand>
</feature>
<feature type="binding site" evidence="1">
    <location>
        <position position="146"/>
    </location>
    <ligand>
        <name>substrate</name>
    </ligand>
</feature>
<feature type="binding site" evidence="1">
    <location>
        <position position="197"/>
    </location>
    <ligand>
        <name>ATP</name>
        <dbReference type="ChEBI" id="CHEBI:30616"/>
    </ligand>
</feature>
<feature type="binding site" evidence="1">
    <location>
        <position position="319"/>
    </location>
    <ligand>
        <name>ATP</name>
        <dbReference type="ChEBI" id="CHEBI:30616"/>
    </ligand>
</feature>
<feature type="binding site" evidence="1">
    <location>
        <begin position="345"/>
        <end position="348"/>
    </location>
    <ligand>
        <name>ATP</name>
        <dbReference type="ChEBI" id="CHEBI:30616"/>
    </ligand>
</feature>
<organism>
    <name type="scientific">Xanthomonas oryzae pv. oryzae (strain MAFF 311018)</name>
    <dbReference type="NCBI Taxonomy" id="342109"/>
    <lineage>
        <taxon>Bacteria</taxon>
        <taxon>Pseudomonadati</taxon>
        <taxon>Pseudomonadota</taxon>
        <taxon>Gammaproteobacteria</taxon>
        <taxon>Lysobacterales</taxon>
        <taxon>Lysobacteraceae</taxon>
        <taxon>Xanthomonas</taxon>
    </lineage>
</organism>
<protein>
    <recommendedName>
        <fullName evidence="1">Phosphoglycerate kinase</fullName>
        <ecNumber evidence="1">2.7.2.3</ecNumber>
    </recommendedName>
</protein>
<reference key="1">
    <citation type="journal article" date="2005" name="Jpn. Agric. Res. Q.">
        <title>Genome sequence of Xanthomonas oryzae pv. oryzae suggests contribution of large numbers of effector genes and insertion sequences to its race diversity.</title>
        <authorList>
            <person name="Ochiai H."/>
            <person name="Inoue Y."/>
            <person name="Takeya M."/>
            <person name="Sasaki A."/>
            <person name="Kaku H."/>
        </authorList>
    </citation>
    <scope>NUCLEOTIDE SEQUENCE [LARGE SCALE GENOMIC DNA]</scope>
    <source>
        <strain>MAFF 311018</strain>
    </source>
</reference>
<name>PGK_XANOM</name>
<gene>
    <name evidence="1" type="primary">pgk</name>
    <name type="ordered locus">XOO3215</name>
</gene>
<comment type="catalytic activity">
    <reaction evidence="1">
        <text>(2R)-3-phosphoglycerate + ATP = (2R)-3-phospho-glyceroyl phosphate + ADP</text>
        <dbReference type="Rhea" id="RHEA:14801"/>
        <dbReference type="ChEBI" id="CHEBI:30616"/>
        <dbReference type="ChEBI" id="CHEBI:57604"/>
        <dbReference type="ChEBI" id="CHEBI:58272"/>
        <dbReference type="ChEBI" id="CHEBI:456216"/>
        <dbReference type="EC" id="2.7.2.3"/>
    </reaction>
</comment>
<comment type="pathway">
    <text evidence="1">Carbohydrate degradation; glycolysis; pyruvate from D-glyceraldehyde 3-phosphate: step 2/5.</text>
</comment>
<comment type="subunit">
    <text evidence="1">Monomer.</text>
</comment>
<comment type="subcellular location">
    <subcellularLocation>
        <location evidence="1">Cytoplasm</location>
    </subcellularLocation>
</comment>
<comment type="similarity">
    <text evidence="1">Belongs to the phosphoglycerate kinase family.</text>
</comment>
<accession>Q2P0F7</accession>
<evidence type="ECO:0000255" key="1">
    <source>
        <dbReference type="HAMAP-Rule" id="MF_00145"/>
    </source>
</evidence>
<keyword id="KW-0067">ATP-binding</keyword>
<keyword id="KW-0963">Cytoplasm</keyword>
<keyword id="KW-0324">Glycolysis</keyword>
<keyword id="KW-0418">Kinase</keyword>
<keyword id="KW-0547">Nucleotide-binding</keyword>
<keyword id="KW-0808">Transferase</keyword>
<dbReference type="EC" id="2.7.2.3" evidence="1"/>
<dbReference type="EMBL" id="AP008229">
    <property type="protein sequence ID" value="BAE69970.1"/>
    <property type="molecule type" value="Genomic_DNA"/>
</dbReference>
<dbReference type="RefSeq" id="WP_011259887.1">
    <property type="nucleotide sequence ID" value="NC_007705.1"/>
</dbReference>
<dbReference type="SMR" id="Q2P0F7"/>
<dbReference type="KEGG" id="xom:XOO3215"/>
<dbReference type="HOGENOM" id="CLU_025427_0_2_6"/>
<dbReference type="UniPathway" id="UPA00109">
    <property type="reaction ID" value="UER00185"/>
</dbReference>
<dbReference type="GO" id="GO:0005829">
    <property type="term" value="C:cytosol"/>
    <property type="evidence" value="ECO:0007669"/>
    <property type="project" value="TreeGrafter"/>
</dbReference>
<dbReference type="GO" id="GO:0043531">
    <property type="term" value="F:ADP binding"/>
    <property type="evidence" value="ECO:0007669"/>
    <property type="project" value="TreeGrafter"/>
</dbReference>
<dbReference type="GO" id="GO:0005524">
    <property type="term" value="F:ATP binding"/>
    <property type="evidence" value="ECO:0007669"/>
    <property type="project" value="UniProtKB-KW"/>
</dbReference>
<dbReference type="GO" id="GO:0004618">
    <property type="term" value="F:phosphoglycerate kinase activity"/>
    <property type="evidence" value="ECO:0007669"/>
    <property type="project" value="UniProtKB-UniRule"/>
</dbReference>
<dbReference type="GO" id="GO:0006094">
    <property type="term" value="P:gluconeogenesis"/>
    <property type="evidence" value="ECO:0007669"/>
    <property type="project" value="TreeGrafter"/>
</dbReference>
<dbReference type="GO" id="GO:0006096">
    <property type="term" value="P:glycolytic process"/>
    <property type="evidence" value="ECO:0007669"/>
    <property type="project" value="UniProtKB-UniRule"/>
</dbReference>
<dbReference type="FunFam" id="3.40.50.1260:FF:000001">
    <property type="entry name" value="Phosphoglycerate kinase"/>
    <property type="match status" value="1"/>
</dbReference>
<dbReference type="FunFam" id="3.40.50.1260:FF:000002">
    <property type="entry name" value="Phosphoglycerate kinase"/>
    <property type="match status" value="1"/>
</dbReference>
<dbReference type="Gene3D" id="3.40.50.1260">
    <property type="entry name" value="Phosphoglycerate kinase, N-terminal domain"/>
    <property type="match status" value="2"/>
</dbReference>
<dbReference type="HAMAP" id="MF_00145">
    <property type="entry name" value="Phosphoglyc_kinase"/>
    <property type="match status" value="1"/>
</dbReference>
<dbReference type="InterPro" id="IPR001576">
    <property type="entry name" value="Phosphoglycerate_kinase"/>
</dbReference>
<dbReference type="InterPro" id="IPR015911">
    <property type="entry name" value="Phosphoglycerate_kinase_CS"/>
</dbReference>
<dbReference type="InterPro" id="IPR015824">
    <property type="entry name" value="Phosphoglycerate_kinase_N"/>
</dbReference>
<dbReference type="InterPro" id="IPR036043">
    <property type="entry name" value="Phosphoglycerate_kinase_sf"/>
</dbReference>
<dbReference type="PANTHER" id="PTHR11406">
    <property type="entry name" value="PHOSPHOGLYCERATE KINASE"/>
    <property type="match status" value="1"/>
</dbReference>
<dbReference type="PANTHER" id="PTHR11406:SF23">
    <property type="entry name" value="PHOSPHOGLYCERATE KINASE 1, CHLOROPLASTIC-RELATED"/>
    <property type="match status" value="1"/>
</dbReference>
<dbReference type="Pfam" id="PF00162">
    <property type="entry name" value="PGK"/>
    <property type="match status" value="1"/>
</dbReference>
<dbReference type="PIRSF" id="PIRSF000724">
    <property type="entry name" value="Pgk"/>
    <property type="match status" value="1"/>
</dbReference>
<dbReference type="PRINTS" id="PR00477">
    <property type="entry name" value="PHGLYCKINASE"/>
</dbReference>
<dbReference type="SUPFAM" id="SSF53748">
    <property type="entry name" value="Phosphoglycerate kinase"/>
    <property type="match status" value="1"/>
</dbReference>
<dbReference type="PROSITE" id="PS00111">
    <property type="entry name" value="PGLYCERATE_KINASE"/>
    <property type="match status" value="1"/>
</dbReference>
<sequence length="391" mass="40841">MSIVRMTDLDLSGKRVLIRQDLNVPIDNGQITSEQRITASVPTIKLALEKGAAVMVTSHLGRPKEGSWTEEDSLAPVATRLAALLGVDVPLVRDWVDGVEVAPGQVVLLENCRMNVGEGKDDQTLARKYAALCDVFVMDAFGTAHRAQASTHGVIRFAPVAAGGPLLMAELDALAKALDNPAKPLLAIVAGSKVSTKLELLSNLVNKVDQLIVGGGIANTFIAAAGHHVGKSLNEPDLIPTANQIVADAKTRGAEIPLPTDVVVAKQFLPDAEASVKALDAVDADDLILDIGPQTAQRYAELIASAGTVVWNGPVGVFEFESFSHGTETLARAIASSKAFSIAGGGDTLAAVDKYDIAKDVTYISTGGGAFLEFLEGKTLPAVAALQARGQ</sequence>
<proteinExistence type="inferred from homology"/>